<keyword id="KW-0027">Amidation</keyword>
<keyword id="KW-0878">Amphibian defense peptide</keyword>
<keyword id="KW-0044">Antibiotic</keyword>
<keyword id="KW-0929">Antimicrobial</keyword>
<keyword id="KW-0165">Cleavage on pair of basic residues</keyword>
<keyword id="KW-0903">Direct protein sequencing</keyword>
<keyword id="KW-0964">Secreted</keyword>
<keyword id="KW-0732">Signal</keyword>
<proteinExistence type="evidence at protein level"/>
<reference evidence="5" key="1">
    <citation type="journal article" date="2007" name="Peptides">
        <title>A combined mass spectrometric and cDNA sequencing approach to the isolation and characterization of novel antimicrobial peptides from the skin secretions of Phyllomedusa hypochondrialis azurea.</title>
        <authorList>
            <person name="Thompson A.H."/>
            <person name="Bjourson A.J."/>
            <person name="Orr D.F."/>
            <person name="Shaw C."/>
            <person name="McClean S."/>
        </authorList>
    </citation>
    <scope>NUCLEOTIDE SEQUENCE [MRNA]</scope>
    <scope>PROTEIN SEQUENCE OF 47-65</scope>
    <scope>SUBCELLULAR LOCATION</scope>
    <scope>TISSUE SPECIFICITY</scope>
    <scope>MASS SPECTROMETRY</scope>
    <scope>AMIDATION AT PHE-65</scope>
    <source>
        <tissue evidence="3">Skin secretion</tissue>
    </source>
</reference>
<dbReference type="GO" id="GO:0005576">
    <property type="term" value="C:extracellular region"/>
    <property type="evidence" value="ECO:0007669"/>
    <property type="project" value="UniProtKB-SubCell"/>
</dbReference>
<dbReference type="GO" id="GO:0042742">
    <property type="term" value="P:defense response to bacterium"/>
    <property type="evidence" value="ECO:0007669"/>
    <property type="project" value="UniProtKB-KW"/>
</dbReference>
<dbReference type="InterPro" id="IPR004275">
    <property type="entry name" value="Frog_antimicrobial_propeptide"/>
</dbReference>
<dbReference type="InterPro" id="IPR016322">
    <property type="entry name" value="FSAP"/>
</dbReference>
<dbReference type="Pfam" id="PF03032">
    <property type="entry name" value="FSAP_sig_propep"/>
    <property type="match status" value="1"/>
</dbReference>
<dbReference type="PIRSF" id="PIRSF001822">
    <property type="entry name" value="Dermaseptin_precursor"/>
    <property type="match status" value="1"/>
</dbReference>
<name>PLS3_PITAZ</name>
<organism>
    <name type="scientific">Pithecopus azureus</name>
    <name type="common">Orange-legged monkey tree frog</name>
    <name type="synonym">Phyllomedusa azurea</name>
    <dbReference type="NCBI Taxonomy" id="2034991"/>
    <lineage>
        <taxon>Eukaryota</taxon>
        <taxon>Metazoa</taxon>
        <taxon>Chordata</taxon>
        <taxon>Craniata</taxon>
        <taxon>Vertebrata</taxon>
        <taxon>Euteleostomi</taxon>
        <taxon>Amphibia</taxon>
        <taxon>Batrachia</taxon>
        <taxon>Anura</taxon>
        <taxon>Neobatrachia</taxon>
        <taxon>Hyloidea</taxon>
        <taxon>Hylidae</taxon>
        <taxon>Phyllomedusinae</taxon>
        <taxon>Pithecopus</taxon>
    </lineage>
</organism>
<comment type="function">
    <text evidence="1">Has antimicrobial activity.</text>
</comment>
<comment type="subcellular location">
    <subcellularLocation>
        <location evidence="3">Secreted</location>
    </subcellularLocation>
</comment>
<comment type="tissue specificity">
    <text evidence="3">Expressed by the skin glands.</text>
</comment>
<comment type="mass spectrometry"/>
<comment type="similarity">
    <text evidence="2">Belongs to the frog skin active peptide (FSAP) family. Phylloseptin subfamily.</text>
</comment>
<comment type="online information" name="The antimicrobial peptide database">
    <link uri="https://wangapd3.com/database/query_output.php?ID=00954"/>
</comment>
<accession>P85883</accession>
<feature type="signal peptide" evidence="2">
    <location>
        <begin position="1"/>
        <end position="22"/>
    </location>
</feature>
<feature type="propeptide" id="PRO_0000372703" evidence="3">
    <location>
        <begin position="23"/>
        <end position="44"/>
    </location>
</feature>
<feature type="peptide" id="PRO_0000372704" description="Phylloseptin-Az3" evidence="3">
    <location>
        <begin position="47"/>
        <end position="65"/>
    </location>
</feature>
<feature type="modified residue" description="Phenylalanine amide" evidence="3">
    <location>
        <position position="65"/>
    </location>
</feature>
<sequence>MAFLKKSLFLVLFLGLVSLSICEEEKRETEEEEYNQEDDDKSEEKRFLSLIPTAINAVSALAKHFG</sequence>
<protein>
    <recommendedName>
        <fullName evidence="5">Phylloseptin-Az3</fullName>
        <shortName evidence="5">PLS-Az3</shortName>
    </recommendedName>
    <alternativeName>
        <fullName evidence="4">Phylloseptin-8</fullName>
        <shortName evidence="4">PS-8</shortName>
    </alternativeName>
</protein>
<evidence type="ECO:0000250" key="1">
    <source>
        <dbReference type="UniProtKB" id="P84572"/>
    </source>
</evidence>
<evidence type="ECO:0000255" key="2"/>
<evidence type="ECO:0000269" key="3">
    <source>
    </source>
</evidence>
<evidence type="ECO:0000303" key="4">
    <source>
    </source>
</evidence>
<evidence type="ECO:0000305" key="5"/>